<protein>
    <recommendedName>
        <fullName evidence="1">Probable glycine dehydrogenase (decarboxylating) subunit 1</fullName>
        <ecNumber evidence="1">1.4.4.2</ecNumber>
    </recommendedName>
    <alternativeName>
        <fullName evidence="1">Glycine cleavage system P-protein subunit 1</fullName>
    </alternativeName>
    <alternativeName>
        <fullName evidence="1">Glycine decarboxylase subunit 1</fullName>
    </alternativeName>
    <alternativeName>
        <fullName evidence="1">Glycine dehydrogenase (aminomethyl-transferring) subunit 1</fullName>
    </alternativeName>
</protein>
<sequence>MSFIPHKLEQIKKMLDTIGASSVDQLFDEIPRHLRADTLKIKDGINEIQLANLMRKRANKNHHNINYIGAGAYSHHIPAAIWDIVARGEFYTAYTPYQAEASQGGLQVIYEFQTMMAGLTGMDASNASMYDGATALAESVLMAIRSNKKAKSQKVLIAEALHPTYLRVLETITKHQGIEFDIVNLDSKNGKTDVTKLEDFANTNYAAVVIQSPNFLGQLADVDGITNWAHKHGALVIAVTNPMSLAILKSPAEWGDNGADIVCGEGQPMGVPLASGGPYFGFMTCKMAHVRQMPGRIVGRTVDLDGNEGFCLTLQAREQHIRRAKATSNICTNQGLMVTAATIYMSLLGAEGLERVASISHENTQTLATELAKINGVSIRFNSAFFNEVVIDLPVNAETFVTEMEKEAIDAGYFLGEYHSDLANSIMVCATEIHTSEDIKEYIEATKKVLARIGG</sequence>
<name>GCSPA_FRATT</name>
<accession>Q5NHN8</accession>
<evidence type="ECO:0000255" key="1">
    <source>
        <dbReference type="HAMAP-Rule" id="MF_00712"/>
    </source>
</evidence>
<comment type="function">
    <text evidence="1">The glycine cleavage system catalyzes the degradation of glycine. The P protein binds the alpha-amino group of glycine through its pyridoxal phosphate cofactor; CO(2) is released and the remaining methylamine moiety is then transferred to the lipoamide cofactor of the H protein.</text>
</comment>
<comment type="catalytic activity">
    <reaction evidence="1">
        <text>N(6)-[(R)-lipoyl]-L-lysyl-[glycine-cleavage complex H protein] + glycine + H(+) = N(6)-[(R)-S(8)-aminomethyldihydrolipoyl]-L-lysyl-[glycine-cleavage complex H protein] + CO2</text>
        <dbReference type="Rhea" id="RHEA:24304"/>
        <dbReference type="Rhea" id="RHEA-COMP:10494"/>
        <dbReference type="Rhea" id="RHEA-COMP:10495"/>
        <dbReference type="ChEBI" id="CHEBI:15378"/>
        <dbReference type="ChEBI" id="CHEBI:16526"/>
        <dbReference type="ChEBI" id="CHEBI:57305"/>
        <dbReference type="ChEBI" id="CHEBI:83099"/>
        <dbReference type="ChEBI" id="CHEBI:83143"/>
        <dbReference type="EC" id="1.4.4.2"/>
    </reaction>
</comment>
<comment type="subunit">
    <text evidence="1">The glycine cleavage system is composed of four proteins: P, T, L and H. In this organism, the P 'protein' is a heterodimer of two subunits.</text>
</comment>
<comment type="similarity">
    <text evidence="1">Belongs to the GcvP family. N-terminal subunit subfamily.</text>
</comment>
<proteinExistence type="inferred from homology"/>
<feature type="chain" id="PRO_1000045654" description="Probable glycine dehydrogenase (decarboxylating) subunit 1">
    <location>
        <begin position="1"/>
        <end position="455"/>
    </location>
</feature>
<reference key="1">
    <citation type="journal article" date="2005" name="Nat. Genet.">
        <title>The complete genome sequence of Francisella tularensis, the causative agent of tularemia.</title>
        <authorList>
            <person name="Larsson P."/>
            <person name="Oyston P.C.F."/>
            <person name="Chain P."/>
            <person name="Chu M.C."/>
            <person name="Duffield M."/>
            <person name="Fuxelius H.-H."/>
            <person name="Garcia E."/>
            <person name="Haelltorp G."/>
            <person name="Johansson D."/>
            <person name="Isherwood K.E."/>
            <person name="Karp P.D."/>
            <person name="Larsson E."/>
            <person name="Liu Y."/>
            <person name="Michell S."/>
            <person name="Prior J."/>
            <person name="Prior R."/>
            <person name="Malfatti S."/>
            <person name="Sjoestedt A."/>
            <person name="Svensson K."/>
            <person name="Thompson N."/>
            <person name="Vergez L."/>
            <person name="Wagg J.K."/>
            <person name="Wren B.W."/>
            <person name="Lindler L.E."/>
            <person name="Andersson S.G.E."/>
            <person name="Forsman M."/>
            <person name="Titball R.W."/>
        </authorList>
    </citation>
    <scope>NUCLEOTIDE SEQUENCE [LARGE SCALE GENOMIC DNA]</scope>
    <source>
        <strain>SCHU S4 / Schu 4</strain>
    </source>
</reference>
<organism>
    <name type="scientific">Francisella tularensis subsp. tularensis (strain SCHU S4 / Schu 4)</name>
    <dbReference type="NCBI Taxonomy" id="177416"/>
    <lineage>
        <taxon>Bacteria</taxon>
        <taxon>Pseudomonadati</taxon>
        <taxon>Pseudomonadota</taxon>
        <taxon>Gammaproteobacteria</taxon>
        <taxon>Thiotrichales</taxon>
        <taxon>Francisellaceae</taxon>
        <taxon>Francisella</taxon>
    </lineage>
</organism>
<keyword id="KW-0560">Oxidoreductase</keyword>
<keyword id="KW-1185">Reference proteome</keyword>
<gene>
    <name evidence="1" type="primary">gcvPA</name>
    <name type="ordered locus">FTT_0409</name>
</gene>
<dbReference type="EC" id="1.4.4.2" evidence="1"/>
<dbReference type="EMBL" id="AJ749949">
    <property type="protein sequence ID" value="CAG45042.1"/>
    <property type="molecule type" value="Genomic_DNA"/>
</dbReference>
<dbReference type="RefSeq" id="WP_003020123.1">
    <property type="nucleotide sequence ID" value="NZ_CP010290.1"/>
</dbReference>
<dbReference type="RefSeq" id="YP_169454.1">
    <property type="nucleotide sequence ID" value="NC_006570.2"/>
</dbReference>
<dbReference type="SMR" id="Q5NHN8"/>
<dbReference type="IntAct" id="Q5NHN8">
    <property type="interactions" value="3"/>
</dbReference>
<dbReference type="STRING" id="177416.FTT_0409"/>
<dbReference type="DNASU" id="3192502"/>
<dbReference type="EnsemblBacteria" id="CAG45042">
    <property type="protein sequence ID" value="CAG45042"/>
    <property type="gene ID" value="FTT_0409"/>
</dbReference>
<dbReference type="KEGG" id="ftu:FTT_0409"/>
<dbReference type="eggNOG" id="COG0403">
    <property type="taxonomic scope" value="Bacteria"/>
</dbReference>
<dbReference type="OrthoDB" id="9801272at2"/>
<dbReference type="Proteomes" id="UP000001174">
    <property type="component" value="Chromosome"/>
</dbReference>
<dbReference type="GO" id="GO:0004375">
    <property type="term" value="F:glycine dehydrogenase (decarboxylating) activity"/>
    <property type="evidence" value="ECO:0007669"/>
    <property type="project" value="UniProtKB-EC"/>
</dbReference>
<dbReference type="GO" id="GO:0019464">
    <property type="term" value="P:glycine decarboxylation via glycine cleavage system"/>
    <property type="evidence" value="ECO:0007669"/>
    <property type="project" value="UniProtKB-UniRule"/>
</dbReference>
<dbReference type="GO" id="GO:0009116">
    <property type="term" value="P:nucleoside metabolic process"/>
    <property type="evidence" value="ECO:0007669"/>
    <property type="project" value="InterPro"/>
</dbReference>
<dbReference type="CDD" id="cd00613">
    <property type="entry name" value="GDC-P"/>
    <property type="match status" value="1"/>
</dbReference>
<dbReference type="Gene3D" id="3.90.1150.10">
    <property type="entry name" value="Aspartate Aminotransferase, domain 1"/>
    <property type="match status" value="1"/>
</dbReference>
<dbReference type="Gene3D" id="3.40.640.10">
    <property type="entry name" value="Type I PLP-dependent aspartate aminotransferase-like (Major domain)"/>
    <property type="match status" value="1"/>
</dbReference>
<dbReference type="HAMAP" id="MF_00712">
    <property type="entry name" value="GcvPA"/>
    <property type="match status" value="1"/>
</dbReference>
<dbReference type="InterPro" id="IPR023010">
    <property type="entry name" value="GcvPA"/>
</dbReference>
<dbReference type="InterPro" id="IPR049315">
    <property type="entry name" value="GDC-P_N"/>
</dbReference>
<dbReference type="InterPro" id="IPR020581">
    <property type="entry name" value="GDC_P"/>
</dbReference>
<dbReference type="InterPro" id="IPR015424">
    <property type="entry name" value="PyrdxlP-dep_Trfase"/>
</dbReference>
<dbReference type="InterPro" id="IPR015421">
    <property type="entry name" value="PyrdxlP-dep_Trfase_major"/>
</dbReference>
<dbReference type="InterPro" id="IPR015422">
    <property type="entry name" value="PyrdxlP-dep_Trfase_small"/>
</dbReference>
<dbReference type="NCBIfam" id="NF001696">
    <property type="entry name" value="PRK00451.1"/>
    <property type="match status" value="1"/>
</dbReference>
<dbReference type="PANTHER" id="PTHR42806">
    <property type="entry name" value="GLYCINE CLEAVAGE SYSTEM P-PROTEIN"/>
    <property type="match status" value="1"/>
</dbReference>
<dbReference type="PANTHER" id="PTHR42806:SF1">
    <property type="entry name" value="GLYCINE DEHYDROGENASE (DECARBOXYLATING)"/>
    <property type="match status" value="1"/>
</dbReference>
<dbReference type="Pfam" id="PF02347">
    <property type="entry name" value="GDC-P"/>
    <property type="match status" value="1"/>
</dbReference>
<dbReference type="PIRSF" id="PIRSF006815">
    <property type="entry name" value="GcvPA"/>
    <property type="match status" value="1"/>
</dbReference>
<dbReference type="SUPFAM" id="SSF53383">
    <property type="entry name" value="PLP-dependent transferases"/>
    <property type="match status" value="1"/>
</dbReference>